<sequence>MEGEAGGTLMQEAWESIDAARNYKNELQERMIALELARNQIKESAAQTCHALRQHFVDLKTAITKLLDERQETLLQEVSAIEQENIKPLDDCQKLLEQGVNTADDLLKEGEMAVSGIAGNNENLYNFTNKALHNQLDSLPEVPSLVEVPCLSAQLDEIFLCVVRDHICKLGSVASRPPVQIEELIERPGAILVKWCKCDDDFVAQDYRLQYRKNTASHFEDVYVGSESEFIVLQIDPNVDYQFRVCARGDGRQEWSPWSVLQTSRTTLVPHEWSTGYDGYSLSSRRNIALRNDSVSHGVLYSKAATYLSGQTLTFRVETVGQMDKHDGIGVCVEQFDCESLQRDKAVCVSTSGAVYVNGKEMTNQLPPVSPGSTITFDMEIMTLGQTNNEGPSQKRRVTISSSNREVVFDWLLEQSCDSLYFGCSFVHPGWKVLVF</sequence>
<comment type="function">
    <text evidence="1">May play a role in the negative regulation of cell cycle progression.</text>
</comment>
<comment type="subcellular location">
    <subcellularLocation>
        <location evidence="1">Cytoplasm</location>
    </subcellularLocation>
</comment>
<comment type="similarity">
    <text evidence="4">Belongs to the cytokine receptor-like factor 3 family.</text>
</comment>
<name>CRLF3_XENLA</name>
<dbReference type="EMBL" id="BC045226">
    <property type="protein sequence ID" value="AAH45226.1"/>
    <property type="molecule type" value="mRNA"/>
</dbReference>
<dbReference type="RefSeq" id="NP_001080600.1">
    <property type="nucleotide sequence ID" value="NM_001087131.1"/>
</dbReference>
<dbReference type="SMR" id="Q7ZX59"/>
<dbReference type="DNASU" id="380292"/>
<dbReference type="GeneID" id="380292"/>
<dbReference type="KEGG" id="xla:380292"/>
<dbReference type="AGR" id="Xenbase:XB-GENE-997456"/>
<dbReference type="CTD" id="380292"/>
<dbReference type="Xenbase" id="XB-GENE-997456">
    <property type="gene designation" value="crlf3.L"/>
</dbReference>
<dbReference type="OMA" id="HEWTPGF"/>
<dbReference type="OrthoDB" id="9984427at2759"/>
<dbReference type="Proteomes" id="UP000186698">
    <property type="component" value="Chromosome 9_10L"/>
</dbReference>
<dbReference type="Bgee" id="380292">
    <property type="expression patterns" value="Expressed in spleen and 19 other cell types or tissues"/>
</dbReference>
<dbReference type="GO" id="GO:0005737">
    <property type="term" value="C:cytoplasm"/>
    <property type="evidence" value="ECO:0007669"/>
    <property type="project" value="UniProtKB-SubCell"/>
</dbReference>
<dbReference type="CDD" id="cd00063">
    <property type="entry name" value="FN3"/>
    <property type="match status" value="1"/>
</dbReference>
<dbReference type="FunFam" id="2.60.40.10:FF:000573">
    <property type="entry name" value="Cytokine receptor-like factor 3"/>
    <property type="match status" value="1"/>
</dbReference>
<dbReference type="Gene3D" id="2.60.40.10">
    <property type="entry name" value="Immunoglobulins"/>
    <property type="match status" value="1"/>
</dbReference>
<dbReference type="InterPro" id="IPR003961">
    <property type="entry name" value="FN3_dom"/>
</dbReference>
<dbReference type="InterPro" id="IPR036116">
    <property type="entry name" value="FN3_sf"/>
</dbReference>
<dbReference type="InterPro" id="IPR013783">
    <property type="entry name" value="Ig-like_fold"/>
</dbReference>
<dbReference type="SUPFAM" id="SSF49265">
    <property type="entry name" value="Fibronectin type III"/>
    <property type="match status" value="1"/>
</dbReference>
<dbReference type="PROSITE" id="PS50853">
    <property type="entry name" value="FN3"/>
    <property type="match status" value="1"/>
</dbReference>
<keyword id="KW-0175">Coiled coil</keyword>
<keyword id="KW-0963">Cytoplasm</keyword>
<keyword id="KW-1185">Reference proteome</keyword>
<accession>Q7ZX59</accession>
<organism>
    <name type="scientific">Xenopus laevis</name>
    <name type="common">African clawed frog</name>
    <dbReference type="NCBI Taxonomy" id="8355"/>
    <lineage>
        <taxon>Eukaryota</taxon>
        <taxon>Metazoa</taxon>
        <taxon>Chordata</taxon>
        <taxon>Craniata</taxon>
        <taxon>Vertebrata</taxon>
        <taxon>Euteleostomi</taxon>
        <taxon>Amphibia</taxon>
        <taxon>Batrachia</taxon>
        <taxon>Anura</taxon>
        <taxon>Pipoidea</taxon>
        <taxon>Pipidae</taxon>
        <taxon>Xenopodinae</taxon>
        <taxon>Xenopus</taxon>
        <taxon>Xenopus</taxon>
    </lineage>
</organism>
<gene>
    <name type="primary">crlf3</name>
</gene>
<proteinExistence type="evidence at transcript level"/>
<evidence type="ECO:0000250" key="1"/>
<evidence type="ECO:0000255" key="2"/>
<evidence type="ECO:0000255" key="3">
    <source>
        <dbReference type="PROSITE-ProRule" id="PRU00316"/>
    </source>
</evidence>
<evidence type="ECO:0000305" key="4"/>
<protein>
    <recommendedName>
        <fullName>Cytokine receptor-like factor 3</fullName>
    </recommendedName>
</protein>
<feature type="chain" id="PRO_0000288939" description="Cytokine receptor-like factor 3">
    <location>
        <begin position="1"/>
        <end position="436"/>
    </location>
</feature>
<feature type="domain" description="Fibronectin type-III" evidence="3">
    <location>
        <begin position="177"/>
        <end position="270"/>
    </location>
</feature>
<feature type="coiled-coil region" evidence="2">
    <location>
        <begin position="9"/>
        <end position="87"/>
    </location>
</feature>
<reference key="1">
    <citation type="submission" date="2003-01" db="EMBL/GenBank/DDBJ databases">
        <authorList>
            <consortium name="NIH - Xenopus Gene Collection (XGC) project"/>
        </authorList>
    </citation>
    <scope>NUCLEOTIDE SEQUENCE [LARGE SCALE MRNA]</scope>
    <source>
        <tissue>Embryo</tissue>
    </source>
</reference>